<dbReference type="EC" id="6.1.1.14" evidence="1"/>
<dbReference type="EMBL" id="CP000316">
    <property type="protein sequence ID" value="ABE46095.1"/>
    <property type="molecule type" value="Genomic_DNA"/>
</dbReference>
<dbReference type="RefSeq" id="WP_011485084.1">
    <property type="nucleotide sequence ID" value="NC_007948.1"/>
</dbReference>
<dbReference type="SMR" id="Q124E7"/>
<dbReference type="STRING" id="296591.Bpro_4203"/>
<dbReference type="KEGG" id="pol:Bpro_4203"/>
<dbReference type="eggNOG" id="COG0752">
    <property type="taxonomic scope" value="Bacteria"/>
</dbReference>
<dbReference type="HOGENOM" id="CLU_057066_1_0_4"/>
<dbReference type="OrthoDB" id="9802183at2"/>
<dbReference type="Proteomes" id="UP000001983">
    <property type="component" value="Chromosome"/>
</dbReference>
<dbReference type="GO" id="GO:0005829">
    <property type="term" value="C:cytosol"/>
    <property type="evidence" value="ECO:0007669"/>
    <property type="project" value="TreeGrafter"/>
</dbReference>
<dbReference type="GO" id="GO:0005524">
    <property type="term" value="F:ATP binding"/>
    <property type="evidence" value="ECO:0007669"/>
    <property type="project" value="UniProtKB-UniRule"/>
</dbReference>
<dbReference type="GO" id="GO:0004820">
    <property type="term" value="F:glycine-tRNA ligase activity"/>
    <property type="evidence" value="ECO:0007669"/>
    <property type="project" value="UniProtKB-UniRule"/>
</dbReference>
<dbReference type="GO" id="GO:0006426">
    <property type="term" value="P:glycyl-tRNA aminoacylation"/>
    <property type="evidence" value="ECO:0007669"/>
    <property type="project" value="UniProtKB-UniRule"/>
</dbReference>
<dbReference type="CDD" id="cd00733">
    <property type="entry name" value="GlyRS_alpha_core"/>
    <property type="match status" value="1"/>
</dbReference>
<dbReference type="FunFam" id="3.30.930.10:FF:000006">
    <property type="entry name" value="Glycine--tRNA ligase alpha subunit"/>
    <property type="match status" value="1"/>
</dbReference>
<dbReference type="Gene3D" id="3.30.930.10">
    <property type="entry name" value="Bira Bifunctional Protein, Domain 2"/>
    <property type="match status" value="1"/>
</dbReference>
<dbReference type="Gene3D" id="1.20.58.180">
    <property type="entry name" value="Class II aaRS and biotin synthetases, domain 2"/>
    <property type="match status" value="1"/>
</dbReference>
<dbReference type="HAMAP" id="MF_00254">
    <property type="entry name" value="Gly_tRNA_synth_alpha"/>
    <property type="match status" value="1"/>
</dbReference>
<dbReference type="InterPro" id="IPR045864">
    <property type="entry name" value="aa-tRNA-synth_II/BPL/LPL"/>
</dbReference>
<dbReference type="InterPro" id="IPR006194">
    <property type="entry name" value="Gly-tRNA-synth_heterodimer"/>
</dbReference>
<dbReference type="InterPro" id="IPR002310">
    <property type="entry name" value="Gly-tRNA_ligase_asu"/>
</dbReference>
<dbReference type="NCBIfam" id="TIGR00388">
    <property type="entry name" value="glyQ"/>
    <property type="match status" value="1"/>
</dbReference>
<dbReference type="NCBIfam" id="NF006827">
    <property type="entry name" value="PRK09348.1"/>
    <property type="match status" value="1"/>
</dbReference>
<dbReference type="PANTHER" id="PTHR30075:SF2">
    <property type="entry name" value="GLYCINE--TRNA LIGASE, CHLOROPLASTIC_MITOCHONDRIAL 2"/>
    <property type="match status" value="1"/>
</dbReference>
<dbReference type="PANTHER" id="PTHR30075">
    <property type="entry name" value="GLYCYL-TRNA SYNTHETASE"/>
    <property type="match status" value="1"/>
</dbReference>
<dbReference type="Pfam" id="PF02091">
    <property type="entry name" value="tRNA-synt_2e"/>
    <property type="match status" value="1"/>
</dbReference>
<dbReference type="PRINTS" id="PR01044">
    <property type="entry name" value="TRNASYNTHGA"/>
</dbReference>
<dbReference type="SUPFAM" id="SSF55681">
    <property type="entry name" value="Class II aaRS and biotin synthetases"/>
    <property type="match status" value="1"/>
</dbReference>
<dbReference type="PROSITE" id="PS50861">
    <property type="entry name" value="AA_TRNA_LIGASE_II_GLYAB"/>
    <property type="match status" value="1"/>
</dbReference>
<evidence type="ECO:0000255" key="1">
    <source>
        <dbReference type="HAMAP-Rule" id="MF_00254"/>
    </source>
</evidence>
<feature type="chain" id="PRO_1000047459" description="Glycine--tRNA ligase alpha subunit">
    <location>
        <begin position="1"/>
        <end position="301"/>
    </location>
</feature>
<keyword id="KW-0030">Aminoacyl-tRNA synthetase</keyword>
<keyword id="KW-0067">ATP-binding</keyword>
<keyword id="KW-0963">Cytoplasm</keyword>
<keyword id="KW-0436">Ligase</keyword>
<keyword id="KW-0547">Nucleotide-binding</keyword>
<keyword id="KW-0648">Protein biosynthesis</keyword>
<keyword id="KW-1185">Reference proteome</keyword>
<organism>
    <name type="scientific">Polaromonas sp. (strain JS666 / ATCC BAA-500)</name>
    <dbReference type="NCBI Taxonomy" id="296591"/>
    <lineage>
        <taxon>Bacteria</taxon>
        <taxon>Pseudomonadati</taxon>
        <taxon>Pseudomonadota</taxon>
        <taxon>Betaproteobacteria</taxon>
        <taxon>Burkholderiales</taxon>
        <taxon>Comamonadaceae</taxon>
        <taxon>Polaromonas</taxon>
    </lineage>
</organism>
<sequence>MLTFQQIILKLQSYWDAQGCALLQPYDMEVGAGTSHTATFLRALGPEPWKAAYVQPSRRPKDGRYGENPNRLQHYYQYQVVLKPAPANILELYLGSLEALGFDLKKNDIRFVEDDWENPTLGAWGLGWEVWLNGMEVTQFTYFQQVGGIDCKPITGEITYGLERLAMYLQGVDNVYNLTWTDGLSYGDVYKQNEVEQSTYNFEHSDADFLFTAFTAHEKQAKHLIGVQLALPAYEQVLKAAHSFNLLDARGAISVTERAAYIGRIRNLARAVAQSYYESRERLGFPMAPREWVEQMTKKAA</sequence>
<comment type="catalytic activity">
    <reaction evidence="1">
        <text>tRNA(Gly) + glycine + ATP = glycyl-tRNA(Gly) + AMP + diphosphate</text>
        <dbReference type="Rhea" id="RHEA:16013"/>
        <dbReference type="Rhea" id="RHEA-COMP:9664"/>
        <dbReference type="Rhea" id="RHEA-COMP:9683"/>
        <dbReference type="ChEBI" id="CHEBI:30616"/>
        <dbReference type="ChEBI" id="CHEBI:33019"/>
        <dbReference type="ChEBI" id="CHEBI:57305"/>
        <dbReference type="ChEBI" id="CHEBI:78442"/>
        <dbReference type="ChEBI" id="CHEBI:78522"/>
        <dbReference type="ChEBI" id="CHEBI:456215"/>
        <dbReference type="EC" id="6.1.1.14"/>
    </reaction>
</comment>
<comment type="subunit">
    <text evidence="1">Tetramer of two alpha and two beta subunits.</text>
</comment>
<comment type="subcellular location">
    <subcellularLocation>
        <location evidence="1">Cytoplasm</location>
    </subcellularLocation>
</comment>
<comment type="similarity">
    <text evidence="1">Belongs to the class-II aminoacyl-tRNA synthetase family.</text>
</comment>
<accession>Q124E7</accession>
<gene>
    <name evidence="1" type="primary">glyQ</name>
    <name type="ordered locus">Bpro_4203</name>
</gene>
<protein>
    <recommendedName>
        <fullName evidence="1">Glycine--tRNA ligase alpha subunit</fullName>
        <ecNumber evidence="1">6.1.1.14</ecNumber>
    </recommendedName>
    <alternativeName>
        <fullName evidence="1">Glycyl-tRNA synthetase alpha subunit</fullName>
        <shortName evidence="1">GlyRS</shortName>
    </alternativeName>
</protein>
<proteinExistence type="inferred from homology"/>
<reference key="1">
    <citation type="journal article" date="2008" name="Appl. Environ. Microbiol.">
        <title>The genome of Polaromonas sp. strain JS666: insights into the evolution of a hydrocarbon- and xenobiotic-degrading bacterium, and features of relevance to biotechnology.</title>
        <authorList>
            <person name="Mattes T.E."/>
            <person name="Alexander A.K."/>
            <person name="Richardson P.M."/>
            <person name="Munk A.C."/>
            <person name="Han C.S."/>
            <person name="Stothard P."/>
            <person name="Coleman N.V."/>
        </authorList>
    </citation>
    <scope>NUCLEOTIDE SEQUENCE [LARGE SCALE GENOMIC DNA]</scope>
    <source>
        <strain>JS666 / ATCC BAA-500</strain>
    </source>
</reference>
<name>SYGA_POLSJ</name>